<name>INSR2_HUMAN</name>
<feature type="chain" id="PRO_0000422829" description="Insulin, isoform 2">
    <location>
        <begin position="1"/>
        <end position="200"/>
    </location>
</feature>
<feature type="region of interest" description="Disordered" evidence="1">
    <location>
        <begin position="148"/>
        <end position="200"/>
    </location>
</feature>
<feature type="compositionally biased region" description="Pro residues" evidence="1">
    <location>
        <begin position="163"/>
        <end position="174"/>
    </location>
</feature>
<feature type="compositionally biased region" description="Low complexity" evidence="1">
    <location>
        <begin position="175"/>
        <end position="184"/>
    </location>
</feature>
<feature type="sequence conflict" description="In Ref. 1; ABD93453/ABD93452." evidence="3" ref="1">
    <original>L</original>
    <variation>P</variation>
    <location>
        <position position="144"/>
    </location>
</feature>
<gene>
    <name type="primary">INS-IGF2</name>
</gene>
<reference key="1">
    <citation type="journal article" date="2006" name="Hum. Mol. Genet.">
        <title>Imprinting of IGF2 P0 transcript and novel alternatively spliced INS-IGF2 isoforms show differences between mouse and human.</title>
        <authorList>
            <person name="Monk D."/>
            <person name="Sanches R."/>
            <person name="Arnaud P."/>
            <person name="Apostolidou S."/>
            <person name="Hills F.A."/>
            <person name="Abu-Amero S."/>
            <person name="Murrell A."/>
            <person name="Friess H."/>
            <person name="Reik W."/>
            <person name="Stanier P."/>
            <person name="Constancia M."/>
            <person name="Moore G.E."/>
        </authorList>
    </citation>
    <scope>NUCLEOTIDE SEQUENCE [MRNA] (ISOFORM 2)</scope>
    <scope>TISSUE SPECIFICITY</scope>
</reference>
<reference key="2">
    <citation type="journal article" date="2006" name="Nature">
        <title>Human chromosome 11 DNA sequence and analysis including novel gene identification.</title>
        <authorList>
            <person name="Taylor T.D."/>
            <person name="Noguchi H."/>
            <person name="Totoki Y."/>
            <person name="Toyoda A."/>
            <person name="Kuroki Y."/>
            <person name="Dewar K."/>
            <person name="Lloyd C."/>
            <person name="Itoh T."/>
            <person name="Takeda T."/>
            <person name="Kim D.-W."/>
            <person name="She X."/>
            <person name="Barlow K.F."/>
            <person name="Bloom T."/>
            <person name="Bruford E."/>
            <person name="Chang J.L."/>
            <person name="Cuomo C.A."/>
            <person name="Eichler E."/>
            <person name="FitzGerald M.G."/>
            <person name="Jaffe D.B."/>
            <person name="LaButti K."/>
            <person name="Nicol R."/>
            <person name="Park H.-S."/>
            <person name="Seaman C."/>
            <person name="Sougnez C."/>
            <person name="Yang X."/>
            <person name="Zimmer A.R."/>
            <person name="Zody M.C."/>
            <person name="Birren B.W."/>
            <person name="Nusbaum C."/>
            <person name="Fujiyama A."/>
            <person name="Hattori M."/>
            <person name="Rogers J."/>
            <person name="Lander E.S."/>
            <person name="Sakaki Y."/>
        </authorList>
    </citation>
    <scope>NUCLEOTIDE SEQUENCE [LARGE SCALE GENOMIC DNA]</scope>
</reference>
<dbReference type="EMBL" id="DQ104204">
    <property type="protein sequence ID" value="ABD93452.1"/>
    <property type="molecule type" value="mRNA"/>
</dbReference>
<dbReference type="EMBL" id="DQ104205">
    <property type="protein sequence ID" value="ABD93453.1"/>
    <property type="molecule type" value="mRNA"/>
</dbReference>
<dbReference type="EMBL" id="AC132217">
    <property type="status" value="NOT_ANNOTATED_CDS"/>
    <property type="molecule type" value="Genomic_DNA"/>
</dbReference>
<dbReference type="RefSeq" id="NP_001035835.1">
    <molecule id="F8WCM5-1"/>
    <property type="nucleotide sequence ID" value="NM_001042376.3"/>
</dbReference>
<dbReference type="PDB" id="7YQ3">
    <property type="method" value="EM"/>
    <property type="resolution" value="3.60 A"/>
    <property type="chains" value="B=27-51"/>
</dbReference>
<dbReference type="PDB" id="7YQ4">
    <property type="method" value="EM"/>
    <property type="resolution" value="3.95 A"/>
    <property type="chains" value="B=27-51"/>
</dbReference>
<dbReference type="PDB" id="7YQ5">
    <property type="method" value="EM"/>
    <property type="resolution" value="4.27 A"/>
    <property type="chains" value="B=27-51"/>
</dbReference>
<dbReference type="PDB" id="8GUY">
    <property type="method" value="EM"/>
    <property type="resolution" value="4.18 A"/>
    <property type="chains" value="B/D=27-51"/>
</dbReference>
<dbReference type="PDBsum" id="7YQ3"/>
<dbReference type="PDBsum" id="7YQ4"/>
<dbReference type="PDBsum" id="7YQ5"/>
<dbReference type="PDBsum" id="8GUY"/>
<dbReference type="BMRB" id="F8WCM5"/>
<dbReference type="EMDB" id="EMD-34018"/>
<dbReference type="EMDB" id="EMD-34019"/>
<dbReference type="EMDB" id="EMD-34020"/>
<dbReference type="EMDB" id="EMD-34281"/>
<dbReference type="SMR" id="F8WCM5"/>
<dbReference type="BioGRID" id="593225">
    <property type="interactions" value="36"/>
</dbReference>
<dbReference type="FunCoup" id="F8WCM5">
    <property type="interactions" value="9"/>
</dbReference>
<dbReference type="IntAct" id="F8WCM5">
    <property type="interactions" value="1"/>
</dbReference>
<dbReference type="STRING" id="9606.ENSP00000380440"/>
<dbReference type="Allergome" id="2121">
    <property type="allergen name" value="Hom s Insulin"/>
</dbReference>
<dbReference type="iPTMnet" id="F8WCM5"/>
<dbReference type="BioMuta" id="INS-IGF2"/>
<dbReference type="jPOST" id="F8WCM5"/>
<dbReference type="MassIVE" id="F8WCM5"/>
<dbReference type="PaxDb" id="9606-ENSP00000380440"/>
<dbReference type="Antibodypedia" id="1030">
    <property type="antibodies" value="73 antibodies from 9 providers"/>
</dbReference>
<dbReference type="DNASU" id="723961"/>
<dbReference type="Ensembl" id="ENST00000356578.8">
    <molecule id="F8WCM5-1"/>
    <property type="protein sequence ID" value="ENSP00000348986.4"/>
    <property type="gene ID" value="ENSG00000129965.15"/>
</dbReference>
<dbReference type="Ensembl" id="ENST00000397270.1">
    <molecule id="F8WCM5-1"/>
    <property type="protein sequence ID" value="ENSP00000380440.1"/>
    <property type="gene ID" value="ENSG00000129965.15"/>
</dbReference>
<dbReference type="GeneID" id="723961"/>
<dbReference type="KEGG" id="hsa:723961"/>
<dbReference type="UCSC" id="uc001lvm.4">
    <molecule id="F8WCM5-1"/>
    <property type="organism name" value="human"/>
</dbReference>
<dbReference type="AGR" id="HGNC:33527"/>
<dbReference type="CTD" id="723961"/>
<dbReference type="DisGeNET" id="723961"/>
<dbReference type="GeneCards" id="INS-IGF2"/>
<dbReference type="HGNC" id="HGNC:33527">
    <property type="gene designation" value="INS-IGF2"/>
</dbReference>
<dbReference type="HPA" id="ENSG00000129965">
    <property type="expression patterns" value="Tissue enriched (pancreas)"/>
</dbReference>
<dbReference type="MalaCards" id="INS-IGF2"/>
<dbReference type="neXtProt" id="NX_F8WCM5"/>
<dbReference type="OpenTargets" id="ENSG00000129965"/>
<dbReference type="VEuPathDB" id="HostDB:ENSG00000129965"/>
<dbReference type="eggNOG" id="ENOG502T8I0">
    <property type="taxonomic scope" value="Eukaryota"/>
</dbReference>
<dbReference type="HOGENOM" id="CLU_112503_0_0_1"/>
<dbReference type="InParanoid" id="F8WCM5"/>
<dbReference type="OrthoDB" id="17149at9604"/>
<dbReference type="PAN-GO" id="F8WCM5">
    <property type="GO annotations" value="1 GO annotation based on evolutionary models"/>
</dbReference>
<dbReference type="PhylomeDB" id="F8WCM5"/>
<dbReference type="PathwayCommons" id="F8WCM5"/>
<dbReference type="BioGRID-ORCS" id="723961">
    <property type="hits" value="17 hits in 1082 CRISPR screens"/>
</dbReference>
<dbReference type="ChiTaRS" id="INS-IGF2">
    <property type="organism name" value="human"/>
</dbReference>
<dbReference type="GenomeRNAi" id="723961"/>
<dbReference type="Pharos" id="F8WCM5">
    <property type="development level" value="Tbio"/>
</dbReference>
<dbReference type="PRO" id="PR:F8WCM5"/>
<dbReference type="Proteomes" id="UP000005640">
    <property type="component" value="Chromosome 11"/>
</dbReference>
<dbReference type="RNAct" id="F8WCM5">
    <property type="molecule type" value="protein"/>
</dbReference>
<dbReference type="Bgee" id="ENSG00000129965">
    <property type="expression patterns" value="Expressed in islet of Langerhans and 19 other cell types or tissues"/>
</dbReference>
<dbReference type="GO" id="GO:0005615">
    <property type="term" value="C:extracellular space"/>
    <property type="evidence" value="ECO:0000318"/>
    <property type="project" value="GO_Central"/>
</dbReference>
<dbReference type="GO" id="GO:0005179">
    <property type="term" value="F:hormone activity"/>
    <property type="evidence" value="ECO:0007669"/>
    <property type="project" value="InterPro"/>
</dbReference>
<dbReference type="CDD" id="cd04367">
    <property type="entry name" value="IlGF_insulin_like"/>
    <property type="match status" value="1"/>
</dbReference>
<dbReference type="FunFam" id="1.10.100.10:FF:000005">
    <property type="entry name" value="Insulin, isoform 2"/>
    <property type="match status" value="1"/>
</dbReference>
<dbReference type="Gene3D" id="1.10.100.10">
    <property type="entry name" value="Insulin-like"/>
    <property type="match status" value="1"/>
</dbReference>
<dbReference type="InterPro" id="IPR004825">
    <property type="entry name" value="Insulin"/>
</dbReference>
<dbReference type="InterPro" id="IPR016179">
    <property type="entry name" value="Insulin-like"/>
</dbReference>
<dbReference type="InterPro" id="IPR036438">
    <property type="entry name" value="Insulin-like_sf"/>
</dbReference>
<dbReference type="PANTHER" id="PTHR11454:SF32">
    <property type="entry name" value="INSULIN, ISOFORM 2"/>
    <property type="match status" value="1"/>
</dbReference>
<dbReference type="PANTHER" id="PTHR11454">
    <property type="entry name" value="INSULIN/INSULIN GROWTH FACTOR"/>
    <property type="match status" value="1"/>
</dbReference>
<dbReference type="Pfam" id="PF00049">
    <property type="entry name" value="Insulin"/>
    <property type="match status" value="1"/>
</dbReference>
<dbReference type="PRINTS" id="PR00277">
    <property type="entry name" value="INSULIN"/>
</dbReference>
<dbReference type="SMART" id="SM00078">
    <property type="entry name" value="IlGF"/>
    <property type="match status" value="1"/>
</dbReference>
<dbReference type="SUPFAM" id="SSF56994">
    <property type="entry name" value="Insulin-like"/>
    <property type="match status" value="1"/>
</dbReference>
<organism>
    <name type="scientific">Homo sapiens</name>
    <name type="common">Human</name>
    <dbReference type="NCBI Taxonomy" id="9606"/>
    <lineage>
        <taxon>Eukaryota</taxon>
        <taxon>Metazoa</taxon>
        <taxon>Chordata</taxon>
        <taxon>Craniata</taxon>
        <taxon>Vertebrata</taxon>
        <taxon>Euteleostomi</taxon>
        <taxon>Mammalia</taxon>
        <taxon>Eutheria</taxon>
        <taxon>Euarchontoglires</taxon>
        <taxon>Primates</taxon>
        <taxon>Haplorrhini</taxon>
        <taxon>Catarrhini</taxon>
        <taxon>Hominidae</taxon>
        <taxon>Homo</taxon>
    </lineage>
</organism>
<proteinExistence type="evidence at protein level"/>
<keyword id="KW-0002">3D-structure</keyword>
<keyword id="KW-0025">Alternative splicing</keyword>
<keyword id="KW-1267">Proteomics identification</keyword>
<keyword id="KW-1185">Reference proteome</keyword>
<comment type="alternative products">
    <event type="alternative splicing"/>
    <isoform>
        <id>F8WCM5-1</id>
        <name>2</name>
        <name>INS-IGF2</name>
        <sequence type="displayed"/>
    </isoform>
    <isoform>
        <id>P01308-1</id>
        <name>1</name>
        <sequence type="external"/>
    </isoform>
</comment>
<comment type="tissue specificity">
    <text evidence="2">Expressed in pancreas, eye and, to a lower extent, in limb.</text>
</comment>
<comment type="miscellaneous">
    <molecule>Isoform 2</molecule>
    <text>Based on a readthrough transcript which may produce an INS-IGF2 fusion protein.</text>
</comment>
<evidence type="ECO:0000256" key="1">
    <source>
        <dbReference type="SAM" id="MobiDB-lite"/>
    </source>
</evidence>
<evidence type="ECO:0000269" key="2">
    <source>
    </source>
</evidence>
<evidence type="ECO:0000305" key="3"/>
<accession>F8WCM5</accession>
<accession>Q1WM24</accession>
<protein>
    <recommendedName>
        <fullName>Insulin, isoform 2</fullName>
    </recommendedName>
    <alternativeName>
        <fullName>INS-IGF2 readthrough transcript protein</fullName>
    </alternativeName>
</protein>
<sequence>MALWMRLLPLLALLALWGPDPAAAFVNQHLCGSHLVEALYLVCGERGFFYTPKTRREAEDLQASALSLSSSTSTWPEGLDATARAPPALVVTANIGQAGGSSSRQFRQRALGTSDSPVLFIHCPGAAGTAQGLEYRGRRVTTELVWEEVDSSPQPQGSESLPAQPPAQPAPQPEPQQAREPSPEVSCCGLWPRRPQRSQN</sequence>